<gene>
    <name evidence="1" type="primary">aspS</name>
    <name type="ordered locus">PTO1214</name>
</gene>
<feature type="chain" id="PRO_0000111000" description="Aspartate--tRNA(Asp) ligase">
    <location>
        <begin position="1"/>
        <end position="423"/>
    </location>
</feature>
<feature type="region of interest" description="Aspartate" evidence="1">
    <location>
        <begin position="185"/>
        <end position="188"/>
    </location>
</feature>
<feature type="binding site" evidence="1">
    <location>
        <position position="163"/>
    </location>
    <ligand>
        <name>L-aspartate</name>
        <dbReference type="ChEBI" id="CHEBI:29991"/>
    </ligand>
</feature>
<feature type="binding site" evidence="1">
    <location>
        <begin position="207"/>
        <end position="209"/>
    </location>
    <ligand>
        <name>ATP</name>
        <dbReference type="ChEBI" id="CHEBI:30616"/>
    </ligand>
</feature>
<feature type="binding site" evidence="1">
    <location>
        <position position="207"/>
    </location>
    <ligand>
        <name>L-aspartate</name>
        <dbReference type="ChEBI" id="CHEBI:29991"/>
    </ligand>
</feature>
<feature type="binding site" evidence="1">
    <location>
        <begin position="215"/>
        <end position="217"/>
    </location>
    <ligand>
        <name>ATP</name>
        <dbReference type="ChEBI" id="CHEBI:30616"/>
    </ligand>
</feature>
<feature type="binding site" evidence="1">
    <location>
        <position position="346"/>
    </location>
    <ligand>
        <name>ATP</name>
        <dbReference type="ChEBI" id="CHEBI:30616"/>
    </ligand>
</feature>
<feature type="binding site" evidence="1">
    <location>
        <position position="346"/>
    </location>
    <ligand>
        <name>Mg(2+)</name>
        <dbReference type="ChEBI" id="CHEBI:18420"/>
        <label>2</label>
    </ligand>
</feature>
<feature type="binding site" evidence="1">
    <location>
        <position position="346"/>
    </location>
    <ligand>
        <name>Mg(2+)</name>
        <dbReference type="ChEBI" id="CHEBI:18420"/>
        <label>3</label>
    </ligand>
</feature>
<feature type="binding site" evidence="1">
    <location>
        <position position="349"/>
    </location>
    <ligand>
        <name>L-aspartate</name>
        <dbReference type="ChEBI" id="CHEBI:29991"/>
    </ligand>
</feature>
<feature type="binding site" evidence="1">
    <location>
        <position position="349"/>
    </location>
    <ligand>
        <name>Mg(2+)</name>
        <dbReference type="ChEBI" id="CHEBI:18420"/>
        <label>2</label>
    </ligand>
</feature>
<feature type="binding site" evidence="1">
    <location>
        <position position="353"/>
    </location>
    <ligand>
        <name>L-aspartate</name>
        <dbReference type="ChEBI" id="CHEBI:29991"/>
    </ligand>
</feature>
<feature type="binding site" evidence="1">
    <location>
        <begin position="394"/>
        <end position="397"/>
    </location>
    <ligand>
        <name>ATP</name>
        <dbReference type="ChEBI" id="CHEBI:30616"/>
    </ligand>
</feature>
<feature type="site" description="Important for tRNA discrimination" evidence="1">
    <location>
        <position position="78"/>
    </location>
</feature>
<comment type="function">
    <text evidence="1">Catalyzes the attachment of L-aspartate to tRNA(Asp) in a two-step reaction: L-aspartate is first activated by ATP to form Asp-AMP and then transferred to the acceptor end of tRNA(Asp).</text>
</comment>
<comment type="catalytic activity">
    <reaction evidence="1">
        <text>tRNA(Asp) + L-aspartate + ATP = L-aspartyl-tRNA(Asp) + AMP + diphosphate</text>
        <dbReference type="Rhea" id="RHEA:19649"/>
        <dbReference type="Rhea" id="RHEA-COMP:9660"/>
        <dbReference type="Rhea" id="RHEA-COMP:9678"/>
        <dbReference type="ChEBI" id="CHEBI:29991"/>
        <dbReference type="ChEBI" id="CHEBI:30616"/>
        <dbReference type="ChEBI" id="CHEBI:33019"/>
        <dbReference type="ChEBI" id="CHEBI:78442"/>
        <dbReference type="ChEBI" id="CHEBI:78516"/>
        <dbReference type="ChEBI" id="CHEBI:456215"/>
        <dbReference type="EC" id="6.1.1.12"/>
    </reaction>
</comment>
<comment type="cofactor">
    <cofactor evidence="1">
        <name>Mg(2+)</name>
        <dbReference type="ChEBI" id="CHEBI:18420"/>
    </cofactor>
    <text evidence="1">Binds 3 Mg(2+) cations per subunit. The strongest magnesium site (Mg1) is bound to the beta- and gamma-phosphates of ATP and four water molecules complete its coordination sphere.</text>
</comment>
<comment type="subunit">
    <text evidence="1">Homodimer.</text>
</comment>
<comment type="subcellular location">
    <subcellularLocation>
        <location evidence="1">Cytoplasm</location>
    </subcellularLocation>
</comment>
<comment type="similarity">
    <text evidence="1">Belongs to the class-II aminoacyl-tRNA synthetase family. Type 2 subfamily.</text>
</comment>
<proteinExistence type="inferred from homology"/>
<name>SYD_PICTO</name>
<sequence length="423" mass="48589">MRNYIKDAADLDEVELSGWAEDIRRIKSIVFIILRDVTGRIQVTVKSENVKNFDEVYKINRESVLKVHGTVDHQSRSKSGIEIIADSVEILNAAEAPLPLGVVDKVQADLDTRLNNRYIDLRKDENLIIFKAQSTLLWGIREYLNRLGFIEVHTPKIVAAATEGGADLFPVKYFERDAYLNQSPQLYKEILMAAGFEKVFEVGPAFRAEKENTLRHLNEFTSIDIEMSFADHNDVMDVLENTVKNAINTLKNNLGDELNKHGFNIDSINGRIPRITYREAIDYLNSSGFQMNFGDDFSPEAARVLGERYKSFYFITEWPVSLRPFYTMKKDDETTKSFDLQLRELEICSGAQRIHRYDDLVNNIKNKGLNPESFTFYLSAFRYGMPPHAGWAIGLERLTMNLLGIKNVRETTLFPRDRTRLLP</sequence>
<protein>
    <recommendedName>
        <fullName evidence="1">Aspartate--tRNA(Asp) ligase</fullName>
        <ecNumber evidence="1">6.1.1.12</ecNumber>
    </recommendedName>
    <alternativeName>
        <fullName evidence="1">Aspartyl-tRNA synthetase</fullName>
        <shortName evidence="1">AspRS</shortName>
    </alternativeName>
    <alternativeName>
        <fullName evidence="1">Discriminating aspartyl-tRNA synthetase</fullName>
        <shortName evidence="1">D-AspRS</shortName>
    </alternativeName>
</protein>
<accession>Q6KZQ3</accession>
<keyword id="KW-0030">Aminoacyl-tRNA synthetase</keyword>
<keyword id="KW-0067">ATP-binding</keyword>
<keyword id="KW-0963">Cytoplasm</keyword>
<keyword id="KW-0436">Ligase</keyword>
<keyword id="KW-0460">Magnesium</keyword>
<keyword id="KW-0479">Metal-binding</keyword>
<keyword id="KW-0547">Nucleotide-binding</keyword>
<keyword id="KW-0648">Protein biosynthesis</keyword>
<dbReference type="EC" id="6.1.1.12" evidence="1"/>
<dbReference type="EMBL" id="AE017261">
    <property type="protein sequence ID" value="AAT43799.1"/>
    <property type="molecule type" value="Genomic_DNA"/>
</dbReference>
<dbReference type="RefSeq" id="WP_011178015.1">
    <property type="nucleotide sequence ID" value="NC_005877.1"/>
</dbReference>
<dbReference type="SMR" id="Q6KZQ3"/>
<dbReference type="FunCoup" id="Q6KZQ3">
    <property type="interactions" value="259"/>
</dbReference>
<dbReference type="STRING" id="263820.PTO1214"/>
<dbReference type="PaxDb" id="263820-PTO1214"/>
<dbReference type="GeneID" id="2845328"/>
<dbReference type="KEGG" id="pto:PTO1214"/>
<dbReference type="eggNOG" id="arCOG00406">
    <property type="taxonomic scope" value="Archaea"/>
</dbReference>
<dbReference type="HOGENOM" id="CLU_004553_2_1_2"/>
<dbReference type="InParanoid" id="Q6KZQ3"/>
<dbReference type="OrthoDB" id="5908at2157"/>
<dbReference type="Proteomes" id="UP000000438">
    <property type="component" value="Chromosome"/>
</dbReference>
<dbReference type="GO" id="GO:0017101">
    <property type="term" value="C:aminoacyl-tRNA synthetase multienzyme complex"/>
    <property type="evidence" value="ECO:0007669"/>
    <property type="project" value="TreeGrafter"/>
</dbReference>
<dbReference type="GO" id="GO:0005829">
    <property type="term" value="C:cytosol"/>
    <property type="evidence" value="ECO:0007669"/>
    <property type="project" value="TreeGrafter"/>
</dbReference>
<dbReference type="GO" id="GO:0004815">
    <property type="term" value="F:aspartate-tRNA ligase activity"/>
    <property type="evidence" value="ECO:0007669"/>
    <property type="project" value="UniProtKB-UniRule"/>
</dbReference>
<dbReference type="GO" id="GO:0005524">
    <property type="term" value="F:ATP binding"/>
    <property type="evidence" value="ECO:0007669"/>
    <property type="project" value="UniProtKB-UniRule"/>
</dbReference>
<dbReference type="GO" id="GO:0000287">
    <property type="term" value="F:magnesium ion binding"/>
    <property type="evidence" value="ECO:0007669"/>
    <property type="project" value="UniProtKB-UniRule"/>
</dbReference>
<dbReference type="GO" id="GO:0003723">
    <property type="term" value="F:RNA binding"/>
    <property type="evidence" value="ECO:0007669"/>
    <property type="project" value="TreeGrafter"/>
</dbReference>
<dbReference type="GO" id="GO:0006422">
    <property type="term" value="P:aspartyl-tRNA aminoacylation"/>
    <property type="evidence" value="ECO:0007669"/>
    <property type="project" value="UniProtKB-UniRule"/>
</dbReference>
<dbReference type="CDD" id="cd00776">
    <property type="entry name" value="AsxRS_core"/>
    <property type="match status" value="1"/>
</dbReference>
<dbReference type="FunFam" id="3.30.930.10:FF:000038">
    <property type="entry name" value="Aspartate--tRNA ligase"/>
    <property type="match status" value="1"/>
</dbReference>
<dbReference type="Gene3D" id="3.30.930.10">
    <property type="entry name" value="Bira Bifunctional Protein, Domain 2"/>
    <property type="match status" value="1"/>
</dbReference>
<dbReference type="Gene3D" id="2.40.50.140">
    <property type="entry name" value="Nucleic acid-binding proteins"/>
    <property type="match status" value="1"/>
</dbReference>
<dbReference type="HAMAP" id="MF_02075">
    <property type="entry name" value="Asp_tRNA_synth_type2"/>
    <property type="match status" value="1"/>
</dbReference>
<dbReference type="InterPro" id="IPR004364">
    <property type="entry name" value="Aa-tRNA-synt_II"/>
</dbReference>
<dbReference type="InterPro" id="IPR006195">
    <property type="entry name" value="aa-tRNA-synth_II"/>
</dbReference>
<dbReference type="InterPro" id="IPR045864">
    <property type="entry name" value="aa-tRNA-synth_II/BPL/LPL"/>
</dbReference>
<dbReference type="InterPro" id="IPR004523">
    <property type="entry name" value="Asp-tRNA_synthase_2"/>
</dbReference>
<dbReference type="InterPro" id="IPR002312">
    <property type="entry name" value="Asp/Asn-tRNA-synth_IIb"/>
</dbReference>
<dbReference type="InterPro" id="IPR012340">
    <property type="entry name" value="NA-bd_OB-fold"/>
</dbReference>
<dbReference type="InterPro" id="IPR004365">
    <property type="entry name" value="NA-bd_OB_tRNA"/>
</dbReference>
<dbReference type="NCBIfam" id="TIGR00458">
    <property type="entry name" value="aspS_nondisc"/>
    <property type="match status" value="1"/>
</dbReference>
<dbReference type="NCBIfam" id="NF003483">
    <property type="entry name" value="PRK05159.1"/>
    <property type="match status" value="1"/>
</dbReference>
<dbReference type="PANTHER" id="PTHR43450:SF1">
    <property type="entry name" value="ASPARTATE--TRNA LIGASE, CYTOPLASMIC"/>
    <property type="match status" value="1"/>
</dbReference>
<dbReference type="PANTHER" id="PTHR43450">
    <property type="entry name" value="ASPARTYL-TRNA SYNTHETASE"/>
    <property type="match status" value="1"/>
</dbReference>
<dbReference type="Pfam" id="PF00152">
    <property type="entry name" value="tRNA-synt_2"/>
    <property type="match status" value="1"/>
</dbReference>
<dbReference type="Pfam" id="PF01336">
    <property type="entry name" value="tRNA_anti-codon"/>
    <property type="match status" value="1"/>
</dbReference>
<dbReference type="PRINTS" id="PR01042">
    <property type="entry name" value="TRNASYNTHASP"/>
</dbReference>
<dbReference type="SUPFAM" id="SSF55681">
    <property type="entry name" value="Class II aaRS and biotin synthetases"/>
    <property type="match status" value="1"/>
</dbReference>
<dbReference type="SUPFAM" id="SSF50249">
    <property type="entry name" value="Nucleic acid-binding proteins"/>
    <property type="match status" value="1"/>
</dbReference>
<dbReference type="PROSITE" id="PS50862">
    <property type="entry name" value="AA_TRNA_LIGASE_II"/>
    <property type="match status" value="1"/>
</dbReference>
<reference key="1">
    <citation type="journal article" date="2004" name="Proc. Natl. Acad. Sci. U.S.A.">
        <title>Genome sequence of Picrophilus torridus and its implications for life around pH 0.</title>
        <authorList>
            <person name="Fuetterer O."/>
            <person name="Angelov A."/>
            <person name="Liesegang H."/>
            <person name="Gottschalk G."/>
            <person name="Schleper C."/>
            <person name="Schepers B."/>
            <person name="Dock C."/>
            <person name="Antranikian G."/>
            <person name="Liebl W."/>
        </authorList>
    </citation>
    <scope>NUCLEOTIDE SEQUENCE [LARGE SCALE GENOMIC DNA]</scope>
    <source>
        <strain>ATCC 700027 / DSM 9790 / JCM 10055 / NBRC 100828 / KAW 2/3</strain>
    </source>
</reference>
<organism>
    <name type="scientific">Picrophilus torridus (strain ATCC 700027 / DSM 9790 / JCM 10055 / NBRC 100828 / KAW 2/3)</name>
    <dbReference type="NCBI Taxonomy" id="1122961"/>
    <lineage>
        <taxon>Archaea</taxon>
        <taxon>Methanobacteriati</taxon>
        <taxon>Thermoplasmatota</taxon>
        <taxon>Thermoplasmata</taxon>
        <taxon>Thermoplasmatales</taxon>
        <taxon>Picrophilaceae</taxon>
        <taxon>Picrophilus</taxon>
    </lineage>
</organism>
<evidence type="ECO:0000255" key="1">
    <source>
        <dbReference type="HAMAP-Rule" id="MF_02075"/>
    </source>
</evidence>